<sequence>MIKVGICDTTFARYDMGGAAIDEIKKHATGIKIIRRTVPGIKDLPVACKKLIEEEGCEMVMALGMPGPEEKDKVCAHEASTGLIQAQLMTNTHILEVFVHEDEEDDPEDLKVLADNRAREHAQNLIMMLFRPERLTRDAGMGMREGKPDVGPL</sequence>
<dbReference type="EC" id="2.5.1.9"/>
<dbReference type="EMBL" id="X94292">
    <property type="protein sequence ID" value="CAA63959.1"/>
    <property type="molecule type" value="Genomic_DNA"/>
</dbReference>
<dbReference type="EMBL" id="CP001710">
    <property type="protein sequence ID" value="ADL58179.1"/>
    <property type="molecule type" value="Genomic_DNA"/>
</dbReference>
<dbReference type="SMR" id="Q59587"/>
<dbReference type="STRING" id="79929.MTBMA_c05840"/>
<dbReference type="PaxDb" id="79929-MTBMA_c05840"/>
<dbReference type="KEGG" id="mmg:MTBMA_c05840"/>
<dbReference type="PATRIC" id="fig|79929.8.peg.568"/>
<dbReference type="HOGENOM" id="CLU_1682776_0_0_2"/>
<dbReference type="BRENDA" id="2.5.1.9">
    <property type="organism ID" value="3256"/>
</dbReference>
<dbReference type="UniPathway" id="UPA00275">
    <property type="reaction ID" value="UER00405"/>
</dbReference>
<dbReference type="Proteomes" id="UP000000345">
    <property type="component" value="Chromosome"/>
</dbReference>
<dbReference type="GO" id="GO:0009349">
    <property type="term" value="C:riboflavin synthase complex"/>
    <property type="evidence" value="ECO:0007669"/>
    <property type="project" value="InterPro"/>
</dbReference>
<dbReference type="GO" id="GO:0004746">
    <property type="term" value="F:riboflavin synthase activity"/>
    <property type="evidence" value="ECO:0007669"/>
    <property type="project" value="UniProtKB-EC"/>
</dbReference>
<dbReference type="GO" id="GO:0009231">
    <property type="term" value="P:riboflavin biosynthetic process"/>
    <property type="evidence" value="ECO:0007669"/>
    <property type="project" value="UniProtKB-UniPathway"/>
</dbReference>
<dbReference type="CDD" id="cd09210">
    <property type="entry name" value="Riboflavin_synthase_archaeal"/>
    <property type="match status" value="1"/>
</dbReference>
<dbReference type="Gene3D" id="3.40.50.960">
    <property type="entry name" value="Lumazine/riboflavin synthase"/>
    <property type="match status" value="1"/>
</dbReference>
<dbReference type="InterPro" id="IPR002180">
    <property type="entry name" value="LS/RS"/>
</dbReference>
<dbReference type="InterPro" id="IPR036467">
    <property type="entry name" value="LS/RS_sf"/>
</dbReference>
<dbReference type="InterPro" id="IPR006399">
    <property type="entry name" value="Ribfl_synth_arc"/>
</dbReference>
<dbReference type="NCBIfam" id="TIGR01506">
    <property type="entry name" value="ribC_arch"/>
    <property type="match status" value="1"/>
</dbReference>
<dbReference type="Pfam" id="PF00885">
    <property type="entry name" value="DMRL_synthase"/>
    <property type="match status" value="1"/>
</dbReference>
<dbReference type="PIRSF" id="PIRSF015750">
    <property type="entry name" value="Ribfl_synth_arc"/>
    <property type="match status" value="1"/>
</dbReference>
<dbReference type="SUPFAM" id="SSF52121">
    <property type="entry name" value="Lumazine synthase"/>
    <property type="match status" value="1"/>
</dbReference>
<name>RISC_METTM</name>
<feature type="chain" id="PRO_0000134862" description="Riboflavin synthase">
    <location>
        <begin position="1"/>
        <end position="153"/>
    </location>
</feature>
<proteinExistence type="evidence at protein level"/>
<organism>
    <name type="scientific">Methanothermobacter marburgensis (strain ATCC BAA-927 / DSM 2133 / JCM 14651 / NBRC 100331 / OCM 82 / Marburg)</name>
    <name type="common">Methanobacterium thermoautotrophicum</name>
    <dbReference type="NCBI Taxonomy" id="79929"/>
    <lineage>
        <taxon>Archaea</taxon>
        <taxon>Methanobacteriati</taxon>
        <taxon>Methanobacteriota</taxon>
        <taxon>Methanomada group</taxon>
        <taxon>Methanobacteria</taxon>
        <taxon>Methanobacteriales</taxon>
        <taxon>Methanobacteriaceae</taxon>
        <taxon>Methanothermobacter</taxon>
    </lineage>
</organism>
<accession>Q59587</accession>
<accession>D9PVD1</accession>
<gene>
    <name type="primary">ribC</name>
    <name type="ordered locus">MTBMA_c05840</name>
</gene>
<reference key="1">
    <citation type="journal article" date="1997" name="J. Bacteriol.">
        <title>Biosynthesis of riboflavin: an unusual riboflavin synthase of Methanobacterium thermoautotrophicum.</title>
        <authorList>
            <person name="Eberhardt S."/>
            <person name="Korn S."/>
            <person name="Lottspeich F."/>
            <person name="Bacher A."/>
        </authorList>
    </citation>
    <scope>NUCLEOTIDE SEQUENCE [GENOMIC DNA]</scope>
    <scope>PROTEIN SEQUENCE OF 1-42 AND 129-151</scope>
    <source>
        <strain>ATCC BAA-927 / DSM 2133 / JCM 14651 / NBRC 100331 / OCM 82 / Marburg</strain>
    </source>
</reference>
<reference key="2">
    <citation type="journal article" date="2010" name="J. Bacteriol.">
        <title>Complete genome sequence of Methanothermobacter marburgensis, a methanoarchaeon model organism.</title>
        <authorList>
            <person name="Liesegang H."/>
            <person name="Kaster A.K."/>
            <person name="Wiezer A."/>
            <person name="Goenrich M."/>
            <person name="Wollherr A."/>
            <person name="Seedorf H."/>
            <person name="Gottschalk G."/>
            <person name="Thauer R.K."/>
        </authorList>
    </citation>
    <scope>NUCLEOTIDE SEQUENCE [LARGE SCALE GENOMIC DNA]</scope>
    <source>
        <strain>ATCC BAA-927 / DSM 2133 / JCM 14651 / NBRC 100331 / OCM 82 / Marburg</strain>
    </source>
</reference>
<protein>
    <recommendedName>
        <fullName>Riboflavin synthase</fullName>
        <ecNumber>2.5.1.9</ecNumber>
    </recommendedName>
</protein>
<evidence type="ECO:0000305" key="1"/>
<keyword id="KW-0903">Direct protein sequencing</keyword>
<keyword id="KW-0460">Magnesium</keyword>
<keyword id="KW-0686">Riboflavin biosynthesis</keyword>
<keyword id="KW-0808">Transferase</keyword>
<comment type="function">
    <text>The relatively low activity of this enzyme suggested that 6,7-dimethyl-8-ribityllumazine might not be its natural substrate.</text>
</comment>
<comment type="catalytic activity">
    <reaction>
        <text>2 6,7-dimethyl-8-(1-D-ribityl)lumazine + H(+) = 5-amino-6-(D-ribitylamino)uracil + riboflavin</text>
        <dbReference type="Rhea" id="RHEA:20772"/>
        <dbReference type="ChEBI" id="CHEBI:15378"/>
        <dbReference type="ChEBI" id="CHEBI:15934"/>
        <dbReference type="ChEBI" id="CHEBI:57986"/>
        <dbReference type="ChEBI" id="CHEBI:58201"/>
        <dbReference type="EC" id="2.5.1.9"/>
    </reaction>
</comment>
<comment type="cofactor">
    <cofactor>
        <name>Mg(2+)</name>
        <dbReference type="ChEBI" id="CHEBI:18420"/>
    </cofactor>
</comment>
<comment type="activity regulation">
    <text>Inhibited by EDTA.</text>
</comment>
<comment type="pathway">
    <text>Cofactor biosynthesis; riboflavin biosynthesis; riboflavin from 2-hydroxy-3-oxobutyl phosphate and 5-amino-6-(D-ribitylamino)uracil: step 2/2.</text>
</comment>
<comment type="subunit">
    <text>Homooligomer.</text>
</comment>
<comment type="similarity">
    <text evidence="1">Belongs to the DMRL synthase family.</text>
</comment>